<name>SOP4_VANPO</name>
<protein>
    <recommendedName>
        <fullName>Protein SOP4</fullName>
    </recommendedName>
</protein>
<gene>
    <name type="primary">SOP4</name>
    <name type="ORF">Kpol_2002p55</name>
</gene>
<proteinExistence type="inferred from homology"/>
<keyword id="KW-0256">Endoplasmic reticulum</keyword>
<keyword id="KW-0325">Glycoprotein</keyword>
<keyword id="KW-0472">Membrane</keyword>
<keyword id="KW-0653">Protein transport</keyword>
<keyword id="KW-1185">Reference proteome</keyword>
<keyword id="KW-0732">Signal</keyword>
<keyword id="KW-0812">Transmembrane</keyword>
<keyword id="KW-1133">Transmembrane helix</keyword>
<keyword id="KW-0813">Transport</keyword>
<evidence type="ECO:0000250" key="1"/>
<evidence type="ECO:0000255" key="2"/>
<evidence type="ECO:0000305" key="3"/>
<sequence length="230" mass="26951">MKLLILCLLYYTQLVICNVVSFTGKYSLHPKNLTIDDISRVDFRIYQIGNYTNKPFSQSTKVNSIDGLFTFNNLPLNRGNNVTTDFVIYSTSLDYNLKPVRILLTYTSWDDEANNHTVKAYSNFVGREYFPDKDIIFPDKLEELSMDPYLEVTYFNKAPYRLYYQERNEGILSTGIIGNILSSRWKTAGVITMILLIIFPYVVERLDPETSQLLREEVQRKQREKYQIQQ</sequence>
<reference key="1">
    <citation type="journal article" date="2007" name="Proc. Natl. Acad. Sci. U.S.A.">
        <title>Independent sorting-out of thousands of duplicated gene pairs in two yeast species descended from a whole-genome duplication.</title>
        <authorList>
            <person name="Scannell D.R."/>
            <person name="Frank A.C."/>
            <person name="Conant G.C."/>
            <person name="Byrne K.P."/>
            <person name="Woolfit M."/>
            <person name="Wolfe K.H."/>
        </authorList>
    </citation>
    <scope>NUCLEOTIDE SEQUENCE [LARGE SCALE GENOMIC DNA]</scope>
    <source>
        <strain>ATCC 22028 / DSM 70294 / BCRC 21397 / CBS 2163 / NBRC 10782 / NRRL Y-8283 / UCD 57-17</strain>
    </source>
</reference>
<accession>A7TFH0</accession>
<dbReference type="EMBL" id="DS480383">
    <property type="protein sequence ID" value="EDO18984.1"/>
    <property type="molecule type" value="Genomic_DNA"/>
</dbReference>
<dbReference type="RefSeq" id="XP_001646842.1">
    <property type="nucleotide sequence ID" value="XM_001646792.1"/>
</dbReference>
<dbReference type="SMR" id="A7TFH0"/>
<dbReference type="FunCoup" id="A7TFH0">
    <property type="interactions" value="43"/>
</dbReference>
<dbReference type="STRING" id="436907.A7TFH0"/>
<dbReference type="GlyCosmos" id="A7TFH0">
    <property type="glycosylation" value="4 sites, No reported glycans"/>
</dbReference>
<dbReference type="GeneID" id="5547310"/>
<dbReference type="KEGG" id="vpo:Kpol_2002p55"/>
<dbReference type="eggNOG" id="ENOG502RXGD">
    <property type="taxonomic scope" value="Eukaryota"/>
</dbReference>
<dbReference type="HOGENOM" id="CLU_102669_0_0_1"/>
<dbReference type="InParanoid" id="A7TFH0"/>
<dbReference type="OMA" id="PYITVEL"/>
<dbReference type="OrthoDB" id="27095at2759"/>
<dbReference type="PhylomeDB" id="A7TFH0"/>
<dbReference type="Proteomes" id="UP000000267">
    <property type="component" value="Unassembled WGS sequence"/>
</dbReference>
<dbReference type="GO" id="GO:0005789">
    <property type="term" value="C:endoplasmic reticulum membrane"/>
    <property type="evidence" value="ECO:0007669"/>
    <property type="project" value="UniProtKB-SubCell"/>
</dbReference>
<dbReference type="GO" id="GO:0006888">
    <property type="term" value="P:endoplasmic reticulum to Golgi vesicle-mediated transport"/>
    <property type="evidence" value="ECO:0007669"/>
    <property type="project" value="EnsemblFungi"/>
</dbReference>
<dbReference type="GO" id="GO:0015031">
    <property type="term" value="P:protein transport"/>
    <property type="evidence" value="ECO:0007669"/>
    <property type="project" value="UniProtKB-KW"/>
</dbReference>
<dbReference type="InterPro" id="IPR031395">
    <property type="entry name" value="Sop4"/>
</dbReference>
<dbReference type="Pfam" id="PF17081">
    <property type="entry name" value="SOP4"/>
    <property type="match status" value="1"/>
</dbReference>
<organism>
    <name type="scientific">Vanderwaltozyma polyspora (strain ATCC 22028 / DSM 70294 / BCRC 21397 / CBS 2163 / NBRC 10782 / NRRL Y-8283 / UCD 57-17)</name>
    <name type="common">Kluyveromyces polysporus</name>
    <dbReference type="NCBI Taxonomy" id="436907"/>
    <lineage>
        <taxon>Eukaryota</taxon>
        <taxon>Fungi</taxon>
        <taxon>Dikarya</taxon>
        <taxon>Ascomycota</taxon>
        <taxon>Saccharomycotina</taxon>
        <taxon>Saccharomycetes</taxon>
        <taxon>Saccharomycetales</taxon>
        <taxon>Saccharomycetaceae</taxon>
        <taxon>Vanderwaltozyma</taxon>
    </lineage>
</organism>
<feature type="signal peptide" evidence="2">
    <location>
        <begin position="1"/>
        <end position="17"/>
    </location>
</feature>
<feature type="chain" id="PRO_0000324498" description="Protein SOP4">
    <location>
        <begin position="18"/>
        <end position="230"/>
    </location>
</feature>
<feature type="topological domain" description="Lumenal" evidence="2">
    <location>
        <begin position="18"/>
        <end position="187"/>
    </location>
</feature>
<feature type="transmembrane region" description="Helical" evidence="2">
    <location>
        <begin position="188"/>
        <end position="208"/>
    </location>
</feature>
<feature type="topological domain" description="Cytoplasmic" evidence="2">
    <location>
        <begin position="209"/>
        <end position="230"/>
    </location>
</feature>
<feature type="glycosylation site" description="N-linked (GlcNAc...) asparagine" evidence="2">
    <location>
        <position position="32"/>
    </location>
</feature>
<feature type="glycosylation site" description="N-linked (GlcNAc...) asparagine" evidence="2">
    <location>
        <position position="50"/>
    </location>
</feature>
<feature type="glycosylation site" description="N-linked (GlcNAc...) asparagine" evidence="2">
    <location>
        <position position="81"/>
    </location>
</feature>
<feature type="glycosylation site" description="N-linked (GlcNAc...) asparagine" evidence="2">
    <location>
        <position position="115"/>
    </location>
</feature>
<comment type="function">
    <text evidence="1">Involved in the export of PMA1, possibly through the monitoring or assisting of PMA1 folding and acquisition of competence to enter vesicles.</text>
</comment>
<comment type="subcellular location">
    <subcellularLocation>
        <location evidence="1">Endoplasmic reticulum membrane</location>
        <topology evidence="1">Single-pass type I membrane protein</topology>
    </subcellularLocation>
</comment>
<comment type="similarity">
    <text evidence="3">Belongs to the SOP4 family.</text>
</comment>